<protein>
    <recommendedName>
        <fullName evidence="1">Large ribosomal subunit protein bL19</fullName>
    </recommendedName>
    <alternativeName>
        <fullName evidence="2">50S ribosomal protein L19</fullName>
    </alternativeName>
</protein>
<proteinExistence type="inferred from homology"/>
<feature type="chain" id="PRO_1000080334" description="Large ribosomal subunit protein bL19">
    <location>
        <begin position="1"/>
        <end position="117"/>
    </location>
</feature>
<reference key="1">
    <citation type="journal article" date="2016" name="Genome Announc.">
        <title>Complete genome sequence of Alkaliphilus metalliredigens strain QYMF, an alkaliphilic and metal-reducing bacterium isolated from borax-contaminated leachate ponds.</title>
        <authorList>
            <person name="Hwang C."/>
            <person name="Copeland A."/>
            <person name="Lucas S."/>
            <person name="Lapidus A."/>
            <person name="Barry K."/>
            <person name="Detter J.C."/>
            <person name="Glavina Del Rio T."/>
            <person name="Hammon N."/>
            <person name="Israni S."/>
            <person name="Dalin E."/>
            <person name="Tice H."/>
            <person name="Pitluck S."/>
            <person name="Chertkov O."/>
            <person name="Brettin T."/>
            <person name="Bruce D."/>
            <person name="Han C."/>
            <person name="Schmutz J."/>
            <person name="Larimer F."/>
            <person name="Land M.L."/>
            <person name="Hauser L."/>
            <person name="Kyrpides N."/>
            <person name="Mikhailova N."/>
            <person name="Ye Q."/>
            <person name="Zhou J."/>
            <person name="Richardson P."/>
            <person name="Fields M.W."/>
        </authorList>
    </citation>
    <scope>NUCLEOTIDE SEQUENCE [LARGE SCALE GENOMIC DNA]</scope>
    <source>
        <strain>QYMF</strain>
    </source>
</reference>
<dbReference type="EMBL" id="CP000724">
    <property type="protein sequence ID" value="ABR48893.1"/>
    <property type="molecule type" value="Genomic_DNA"/>
</dbReference>
<dbReference type="RefSeq" id="WP_012063865.1">
    <property type="nucleotide sequence ID" value="NC_009633.1"/>
</dbReference>
<dbReference type="SMR" id="A6TRS5"/>
<dbReference type="STRING" id="293826.Amet_2742"/>
<dbReference type="KEGG" id="amt:Amet_2742"/>
<dbReference type="eggNOG" id="COG0335">
    <property type="taxonomic scope" value="Bacteria"/>
</dbReference>
<dbReference type="HOGENOM" id="CLU_103507_2_1_9"/>
<dbReference type="OrthoDB" id="9803541at2"/>
<dbReference type="Proteomes" id="UP000001572">
    <property type="component" value="Chromosome"/>
</dbReference>
<dbReference type="GO" id="GO:0022625">
    <property type="term" value="C:cytosolic large ribosomal subunit"/>
    <property type="evidence" value="ECO:0007669"/>
    <property type="project" value="TreeGrafter"/>
</dbReference>
<dbReference type="GO" id="GO:0003735">
    <property type="term" value="F:structural constituent of ribosome"/>
    <property type="evidence" value="ECO:0007669"/>
    <property type="project" value="InterPro"/>
</dbReference>
<dbReference type="GO" id="GO:0006412">
    <property type="term" value="P:translation"/>
    <property type="evidence" value="ECO:0007669"/>
    <property type="project" value="UniProtKB-UniRule"/>
</dbReference>
<dbReference type="FunFam" id="2.30.30.790:FF:000001">
    <property type="entry name" value="50S ribosomal protein L19"/>
    <property type="match status" value="1"/>
</dbReference>
<dbReference type="Gene3D" id="2.30.30.790">
    <property type="match status" value="1"/>
</dbReference>
<dbReference type="HAMAP" id="MF_00402">
    <property type="entry name" value="Ribosomal_bL19"/>
    <property type="match status" value="1"/>
</dbReference>
<dbReference type="InterPro" id="IPR001857">
    <property type="entry name" value="Ribosomal_bL19"/>
</dbReference>
<dbReference type="InterPro" id="IPR018257">
    <property type="entry name" value="Ribosomal_bL19_CS"/>
</dbReference>
<dbReference type="InterPro" id="IPR038657">
    <property type="entry name" value="Ribosomal_bL19_sf"/>
</dbReference>
<dbReference type="InterPro" id="IPR008991">
    <property type="entry name" value="Translation_prot_SH3-like_sf"/>
</dbReference>
<dbReference type="NCBIfam" id="TIGR01024">
    <property type="entry name" value="rplS_bact"/>
    <property type="match status" value="1"/>
</dbReference>
<dbReference type="PANTHER" id="PTHR15680:SF9">
    <property type="entry name" value="LARGE RIBOSOMAL SUBUNIT PROTEIN BL19M"/>
    <property type="match status" value="1"/>
</dbReference>
<dbReference type="PANTHER" id="PTHR15680">
    <property type="entry name" value="RIBOSOMAL PROTEIN L19"/>
    <property type="match status" value="1"/>
</dbReference>
<dbReference type="Pfam" id="PF01245">
    <property type="entry name" value="Ribosomal_L19"/>
    <property type="match status" value="1"/>
</dbReference>
<dbReference type="PIRSF" id="PIRSF002191">
    <property type="entry name" value="Ribosomal_L19"/>
    <property type="match status" value="1"/>
</dbReference>
<dbReference type="PRINTS" id="PR00061">
    <property type="entry name" value="RIBOSOMALL19"/>
</dbReference>
<dbReference type="SUPFAM" id="SSF50104">
    <property type="entry name" value="Translation proteins SH3-like domain"/>
    <property type="match status" value="1"/>
</dbReference>
<dbReference type="PROSITE" id="PS01015">
    <property type="entry name" value="RIBOSOMAL_L19"/>
    <property type="match status" value="1"/>
</dbReference>
<name>RL19_ALKMQ</name>
<comment type="function">
    <text evidence="1">This protein is located at the 30S-50S ribosomal subunit interface and may play a role in the structure and function of the aminoacyl-tRNA binding site.</text>
</comment>
<comment type="similarity">
    <text evidence="1">Belongs to the bacterial ribosomal protein bL19 family.</text>
</comment>
<gene>
    <name evidence="1" type="primary">rplS</name>
    <name type="ordered locus">Amet_2742</name>
</gene>
<accession>A6TRS5</accession>
<organism>
    <name type="scientific">Alkaliphilus metalliredigens (strain QYMF)</name>
    <dbReference type="NCBI Taxonomy" id="293826"/>
    <lineage>
        <taxon>Bacteria</taxon>
        <taxon>Bacillati</taxon>
        <taxon>Bacillota</taxon>
        <taxon>Clostridia</taxon>
        <taxon>Peptostreptococcales</taxon>
        <taxon>Natronincolaceae</taxon>
        <taxon>Alkaliphilus</taxon>
    </lineage>
</organism>
<sequence length="117" mass="13490">MDIIKGIDAAQLKKDIIDFNTGDTIKVHVRIKEGTRERIQVFEGIVIKRQGGGIAETFTVRRISYGVGVERTFPVHSPKIEKIEIVKHGKVRRARIFYLRDRIGKAAFKIKERKNFK</sequence>
<keyword id="KW-1185">Reference proteome</keyword>
<keyword id="KW-0687">Ribonucleoprotein</keyword>
<keyword id="KW-0689">Ribosomal protein</keyword>
<evidence type="ECO:0000255" key="1">
    <source>
        <dbReference type="HAMAP-Rule" id="MF_00402"/>
    </source>
</evidence>
<evidence type="ECO:0000305" key="2"/>